<sequence>MTQTAHPDSVLIIDFGSQVTQLIARRVRETGVYCEIVPFQSSEEGFARLKPKAVILSGSPASALDEGSPRVPQVIFDSGLPIFGICYGQQTICAQLGGKVEAGHHREFGRAFLEIEQDCKLFEGLWSVGSRHQVWMSHGDRVTAIPPGFRVLATSSNAPFAFIADEARKYYAVQFHPEVVHTPDGAKLIQNFVHNIAGITGDWSMSAYRAKAVEQIRAQVGDKRVICALSGGVDSSVAALLIHEAVGDQLTCILVDHGLMRKNEAADVVAMFKEHYNLHLIHVDAIDRFVGELEGVSDPETKRKIIGRLFIETFEEEAKKLGGADFLGQGTLYPDVIESVSFSGGPSVTIKSHHNVGGLPDRMNMKLVEPLRELFKDEVRVLGKELGLPDSFIGRHPFPGPGLAIRCPGGVTREKLDILREADAIYLDEIRKAGLYDAIWQAFAVLLPVQTVGVMGDGRTYEFVCALRAVTSVDGMTADFYHYDMEFLGRAATRIINEVRGINRVVYDVTSKPPGTIEWE</sequence>
<organism>
    <name type="scientific">Allorhizobium ampelinum (strain ATCC BAA-846 / DSM 112012 / S4)</name>
    <name type="common">Agrobacterium vitis (strain S4)</name>
    <dbReference type="NCBI Taxonomy" id="311402"/>
    <lineage>
        <taxon>Bacteria</taxon>
        <taxon>Pseudomonadati</taxon>
        <taxon>Pseudomonadota</taxon>
        <taxon>Alphaproteobacteria</taxon>
        <taxon>Hyphomicrobiales</taxon>
        <taxon>Rhizobiaceae</taxon>
        <taxon>Rhizobium/Agrobacterium group</taxon>
        <taxon>Allorhizobium</taxon>
        <taxon>Allorhizobium ampelinum</taxon>
    </lineage>
</organism>
<protein>
    <recommendedName>
        <fullName evidence="1">GMP synthase [glutamine-hydrolyzing]</fullName>
        <ecNumber evidence="1">6.3.5.2</ecNumber>
    </recommendedName>
    <alternativeName>
        <fullName evidence="1">GMP synthetase</fullName>
    </alternativeName>
    <alternativeName>
        <fullName evidence="1">Glutamine amidotransferase</fullName>
    </alternativeName>
</protein>
<accession>B9JZA3</accession>
<gene>
    <name evidence="1" type="primary">guaA</name>
    <name type="ordered locus">Avi_0327</name>
</gene>
<comment type="function">
    <text evidence="1">Catalyzes the synthesis of GMP from XMP.</text>
</comment>
<comment type="catalytic activity">
    <reaction evidence="1">
        <text>XMP + L-glutamine + ATP + H2O = GMP + L-glutamate + AMP + diphosphate + 2 H(+)</text>
        <dbReference type="Rhea" id="RHEA:11680"/>
        <dbReference type="ChEBI" id="CHEBI:15377"/>
        <dbReference type="ChEBI" id="CHEBI:15378"/>
        <dbReference type="ChEBI" id="CHEBI:29985"/>
        <dbReference type="ChEBI" id="CHEBI:30616"/>
        <dbReference type="ChEBI" id="CHEBI:33019"/>
        <dbReference type="ChEBI" id="CHEBI:57464"/>
        <dbReference type="ChEBI" id="CHEBI:58115"/>
        <dbReference type="ChEBI" id="CHEBI:58359"/>
        <dbReference type="ChEBI" id="CHEBI:456215"/>
        <dbReference type="EC" id="6.3.5.2"/>
    </reaction>
</comment>
<comment type="pathway">
    <text evidence="1">Purine metabolism; GMP biosynthesis; GMP from XMP (L-Gln route): step 1/1.</text>
</comment>
<comment type="subunit">
    <text evidence="1">Homodimer.</text>
</comment>
<evidence type="ECO:0000255" key="1">
    <source>
        <dbReference type="HAMAP-Rule" id="MF_00344"/>
    </source>
</evidence>
<proteinExistence type="inferred from homology"/>
<keyword id="KW-0067">ATP-binding</keyword>
<keyword id="KW-0315">Glutamine amidotransferase</keyword>
<keyword id="KW-0332">GMP biosynthesis</keyword>
<keyword id="KW-0436">Ligase</keyword>
<keyword id="KW-0547">Nucleotide-binding</keyword>
<keyword id="KW-0658">Purine biosynthesis</keyword>
<keyword id="KW-1185">Reference proteome</keyword>
<reference key="1">
    <citation type="journal article" date="2009" name="J. Bacteriol.">
        <title>Genome sequences of three Agrobacterium biovars help elucidate the evolution of multichromosome genomes in bacteria.</title>
        <authorList>
            <person name="Slater S.C."/>
            <person name="Goldman B.S."/>
            <person name="Goodner B."/>
            <person name="Setubal J.C."/>
            <person name="Farrand S.K."/>
            <person name="Nester E.W."/>
            <person name="Burr T.J."/>
            <person name="Banta L."/>
            <person name="Dickerman A.W."/>
            <person name="Paulsen I."/>
            <person name="Otten L."/>
            <person name="Suen G."/>
            <person name="Welch R."/>
            <person name="Almeida N.F."/>
            <person name="Arnold F."/>
            <person name="Burton O.T."/>
            <person name="Du Z."/>
            <person name="Ewing A."/>
            <person name="Godsy E."/>
            <person name="Heisel S."/>
            <person name="Houmiel K.L."/>
            <person name="Jhaveri J."/>
            <person name="Lu J."/>
            <person name="Miller N.M."/>
            <person name="Norton S."/>
            <person name="Chen Q."/>
            <person name="Phoolcharoen W."/>
            <person name="Ohlin V."/>
            <person name="Ondrusek D."/>
            <person name="Pride N."/>
            <person name="Stricklin S.L."/>
            <person name="Sun J."/>
            <person name="Wheeler C."/>
            <person name="Wilson L."/>
            <person name="Zhu H."/>
            <person name="Wood D.W."/>
        </authorList>
    </citation>
    <scope>NUCLEOTIDE SEQUENCE [LARGE SCALE GENOMIC DNA]</scope>
    <source>
        <strain>ATCC BAA-846 / DSM 112012 / S4</strain>
    </source>
</reference>
<feature type="chain" id="PRO_1000133347" description="GMP synthase [glutamine-hydrolyzing]">
    <location>
        <begin position="1"/>
        <end position="520"/>
    </location>
</feature>
<feature type="domain" description="Glutamine amidotransferase type-1" evidence="1">
    <location>
        <begin position="9"/>
        <end position="202"/>
    </location>
</feature>
<feature type="domain" description="GMPS ATP-PPase" evidence="1">
    <location>
        <begin position="203"/>
        <end position="395"/>
    </location>
</feature>
<feature type="active site" description="Nucleophile" evidence="1">
    <location>
        <position position="86"/>
    </location>
</feature>
<feature type="active site" evidence="1">
    <location>
        <position position="176"/>
    </location>
</feature>
<feature type="active site" evidence="1">
    <location>
        <position position="178"/>
    </location>
</feature>
<feature type="binding site" evidence="1">
    <location>
        <begin position="230"/>
        <end position="236"/>
    </location>
    <ligand>
        <name>ATP</name>
        <dbReference type="ChEBI" id="CHEBI:30616"/>
    </ligand>
</feature>
<name>GUAA_ALLAM</name>
<dbReference type="EC" id="6.3.5.2" evidence="1"/>
<dbReference type="EMBL" id="CP000633">
    <property type="protein sequence ID" value="ACM35215.1"/>
    <property type="molecule type" value="Genomic_DNA"/>
</dbReference>
<dbReference type="RefSeq" id="WP_012654745.1">
    <property type="nucleotide sequence ID" value="NC_011989.1"/>
</dbReference>
<dbReference type="SMR" id="B9JZA3"/>
<dbReference type="STRING" id="311402.Avi_0327"/>
<dbReference type="GeneID" id="60681290"/>
<dbReference type="KEGG" id="avi:Avi_0327"/>
<dbReference type="eggNOG" id="COG0518">
    <property type="taxonomic scope" value="Bacteria"/>
</dbReference>
<dbReference type="eggNOG" id="COG0519">
    <property type="taxonomic scope" value="Bacteria"/>
</dbReference>
<dbReference type="HOGENOM" id="CLU_014340_0_5_5"/>
<dbReference type="UniPathway" id="UPA00189">
    <property type="reaction ID" value="UER00296"/>
</dbReference>
<dbReference type="Proteomes" id="UP000001596">
    <property type="component" value="Chromosome 1"/>
</dbReference>
<dbReference type="GO" id="GO:0005829">
    <property type="term" value="C:cytosol"/>
    <property type="evidence" value="ECO:0007669"/>
    <property type="project" value="TreeGrafter"/>
</dbReference>
<dbReference type="GO" id="GO:0005524">
    <property type="term" value="F:ATP binding"/>
    <property type="evidence" value="ECO:0007669"/>
    <property type="project" value="UniProtKB-UniRule"/>
</dbReference>
<dbReference type="GO" id="GO:0003921">
    <property type="term" value="F:GMP synthase activity"/>
    <property type="evidence" value="ECO:0007669"/>
    <property type="project" value="InterPro"/>
</dbReference>
<dbReference type="CDD" id="cd01742">
    <property type="entry name" value="GATase1_GMP_Synthase"/>
    <property type="match status" value="1"/>
</dbReference>
<dbReference type="CDD" id="cd01997">
    <property type="entry name" value="GMP_synthase_C"/>
    <property type="match status" value="1"/>
</dbReference>
<dbReference type="FunFam" id="3.30.300.10:FF:000002">
    <property type="entry name" value="GMP synthase [glutamine-hydrolyzing]"/>
    <property type="match status" value="1"/>
</dbReference>
<dbReference type="FunFam" id="3.40.50.620:FF:000001">
    <property type="entry name" value="GMP synthase [glutamine-hydrolyzing]"/>
    <property type="match status" value="1"/>
</dbReference>
<dbReference type="FunFam" id="3.40.50.880:FF:000001">
    <property type="entry name" value="GMP synthase [glutamine-hydrolyzing]"/>
    <property type="match status" value="1"/>
</dbReference>
<dbReference type="Gene3D" id="3.30.300.10">
    <property type="match status" value="1"/>
</dbReference>
<dbReference type="Gene3D" id="3.40.50.880">
    <property type="match status" value="1"/>
</dbReference>
<dbReference type="Gene3D" id="3.40.50.620">
    <property type="entry name" value="HUPs"/>
    <property type="match status" value="1"/>
</dbReference>
<dbReference type="HAMAP" id="MF_00344">
    <property type="entry name" value="GMP_synthase"/>
    <property type="match status" value="1"/>
</dbReference>
<dbReference type="InterPro" id="IPR029062">
    <property type="entry name" value="Class_I_gatase-like"/>
</dbReference>
<dbReference type="InterPro" id="IPR017926">
    <property type="entry name" value="GATASE"/>
</dbReference>
<dbReference type="InterPro" id="IPR001674">
    <property type="entry name" value="GMP_synth_C"/>
</dbReference>
<dbReference type="InterPro" id="IPR004739">
    <property type="entry name" value="GMP_synth_GATase"/>
</dbReference>
<dbReference type="InterPro" id="IPR022955">
    <property type="entry name" value="GMP_synthase"/>
</dbReference>
<dbReference type="InterPro" id="IPR025777">
    <property type="entry name" value="GMPS_ATP_PPase_dom"/>
</dbReference>
<dbReference type="InterPro" id="IPR022310">
    <property type="entry name" value="NAD/GMP_synthase"/>
</dbReference>
<dbReference type="InterPro" id="IPR014729">
    <property type="entry name" value="Rossmann-like_a/b/a_fold"/>
</dbReference>
<dbReference type="NCBIfam" id="TIGR00884">
    <property type="entry name" value="guaA_Cterm"/>
    <property type="match status" value="1"/>
</dbReference>
<dbReference type="NCBIfam" id="TIGR00888">
    <property type="entry name" value="guaA_Nterm"/>
    <property type="match status" value="1"/>
</dbReference>
<dbReference type="NCBIfam" id="NF000848">
    <property type="entry name" value="PRK00074.1"/>
    <property type="match status" value="1"/>
</dbReference>
<dbReference type="PANTHER" id="PTHR11922:SF2">
    <property type="entry name" value="GMP SYNTHASE [GLUTAMINE-HYDROLYZING]"/>
    <property type="match status" value="1"/>
</dbReference>
<dbReference type="PANTHER" id="PTHR11922">
    <property type="entry name" value="GMP SYNTHASE-RELATED"/>
    <property type="match status" value="1"/>
</dbReference>
<dbReference type="Pfam" id="PF00117">
    <property type="entry name" value="GATase"/>
    <property type="match status" value="1"/>
</dbReference>
<dbReference type="Pfam" id="PF00958">
    <property type="entry name" value="GMP_synt_C"/>
    <property type="match status" value="1"/>
</dbReference>
<dbReference type="Pfam" id="PF02540">
    <property type="entry name" value="NAD_synthase"/>
    <property type="match status" value="1"/>
</dbReference>
<dbReference type="PRINTS" id="PR00096">
    <property type="entry name" value="GATASE"/>
</dbReference>
<dbReference type="SUPFAM" id="SSF52402">
    <property type="entry name" value="Adenine nucleotide alpha hydrolases-like"/>
    <property type="match status" value="1"/>
</dbReference>
<dbReference type="SUPFAM" id="SSF52317">
    <property type="entry name" value="Class I glutamine amidotransferase-like"/>
    <property type="match status" value="1"/>
</dbReference>
<dbReference type="SUPFAM" id="SSF54810">
    <property type="entry name" value="GMP synthetase C-terminal dimerisation domain"/>
    <property type="match status" value="1"/>
</dbReference>
<dbReference type="PROSITE" id="PS51273">
    <property type="entry name" value="GATASE_TYPE_1"/>
    <property type="match status" value="1"/>
</dbReference>
<dbReference type="PROSITE" id="PS51553">
    <property type="entry name" value="GMPS_ATP_PPASE"/>
    <property type="match status" value="1"/>
</dbReference>